<feature type="chain" id="PRO_0000144046" description="Voltage-dependent L-type calcium channel subunit beta-1">
    <location>
        <begin position="1"/>
        <end position="598"/>
    </location>
</feature>
<feature type="domain" description="SH3" evidence="4">
    <location>
        <begin position="100"/>
        <end position="169"/>
    </location>
</feature>
<feature type="region of interest" description="Disordered" evidence="5">
    <location>
        <begin position="1"/>
        <end position="76"/>
    </location>
</feature>
<feature type="region of interest" description="Disordered" evidence="5">
    <location>
        <begin position="179"/>
        <end position="223"/>
    </location>
</feature>
<feature type="region of interest" description="Disordered" evidence="5">
    <location>
        <begin position="466"/>
        <end position="490"/>
    </location>
</feature>
<feature type="region of interest" description="Disordered" evidence="5">
    <location>
        <begin position="518"/>
        <end position="589"/>
    </location>
</feature>
<feature type="compositionally biased region" description="Low complexity" evidence="5">
    <location>
        <begin position="43"/>
        <end position="53"/>
    </location>
</feature>
<feature type="compositionally biased region" description="Polar residues" evidence="5">
    <location>
        <begin position="54"/>
        <end position="71"/>
    </location>
</feature>
<feature type="compositionally biased region" description="Low complexity" evidence="5">
    <location>
        <begin position="181"/>
        <end position="196"/>
    </location>
</feature>
<feature type="compositionally biased region" description="Gly residues" evidence="5">
    <location>
        <begin position="530"/>
        <end position="540"/>
    </location>
</feature>
<feature type="compositionally biased region" description="Acidic residues" evidence="5">
    <location>
        <begin position="548"/>
        <end position="559"/>
    </location>
</feature>
<feature type="modified residue" description="Phosphoserine" evidence="2">
    <location>
        <position position="44"/>
    </location>
</feature>
<feature type="modified residue" description="Phosphoserine" evidence="2">
    <location>
        <position position="47"/>
    </location>
</feature>
<feature type="modified residue" description="Phosphoserine" evidence="2">
    <location>
        <position position="73"/>
    </location>
</feature>
<feature type="modified residue" description="Phosphoserine" evidence="3">
    <location>
        <position position="186"/>
    </location>
</feature>
<feature type="modified residue" description="Phosphoserine" evidence="2">
    <location>
        <position position="193"/>
    </location>
</feature>
<feature type="modified residue" description="Phosphothreonine" evidence="3">
    <location>
        <position position="499"/>
    </location>
</feature>
<feature type="modified residue" description="Phosphoserine" evidence="3">
    <location>
        <position position="547"/>
    </location>
</feature>
<feature type="splice variant" id="VSP_000623" description="In isoform 2." evidence="11 12">
    <original>AKQKQKS</original>
    <variation>GNEMTNLAFELDPLELEEEEAELGEQSGSAKTSVSSVTTPPPHGKRIPFFKK</variation>
    <location>
        <begin position="210"/>
        <end position="216"/>
    </location>
</feature>
<feature type="splice variant" id="VSP_000624" description="In isoform 2 and isoform 3." evidence="10 11 12 13">
    <original>GPYLASGDQPLERATGEHASMHEYPGELGQPPGL</original>
    <variation>VQVLTSLRRNLGFWGGLESSQRGSVVPQEQEHAM</variation>
    <location>
        <begin position="445"/>
        <end position="478"/>
    </location>
</feature>
<feature type="splice variant" id="VSP_000625" description="In isoform 2 and isoform 3." evidence="10 11 12 13">
    <location>
        <begin position="479"/>
        <end position="598"/>
    </location>
</feature>
<feature type="sequence variant" id="VAR_036349" description="In a colorectal cancer sample; somatic mutation; dbSNP:rs1266205915." evidence="8">
    <original>P</original>
    <variation>L</variation>
    <location>
        <position position="339"/>
    </location>
</feature>
<feature type="sequence conflict" description="In Ref. 3; AAA36167." evidence="14" ref="3">
    <original>TS</original>
    <variation>SG</variation>
    <location>
        <begin position="5"/>
        <end position="6"/>
    </location>
</feature>
<feature type="sequence conflict" description="In Ref. 2; AAA51894." evidence="14" ref="2">
    <original>E</original>
    <variation>G</variation>
    <location>
        <position position="21"/>
    </location>
</feature>
<feature type="sequence conflict" description="In Ref. 3; AAA36168/AAA36169." evidence="14" ref="3">
    <location>
        <position position="28"/>
    </location>
</feature>
<feature type="sequence conflict" description="In Ref. 3; AAA36167/AAA36168/AAA36169." evidence="14" ref="3">
    <original>G</original>
    <variation>R</variation>
    <location>
        <position position="29"/>
    </location>
</feature>
<feature type="sequence conflict" description="In Ref. 3; AAA36167." evidence="14" ref="3">
    <original>H</original>
    <variation>D</variation>
    <location>
        <position position="135"/>
    </location>
</feature>
<feature type="sequence conflict" description="In Ref. 3; AAA36167." evidence="14" ref="3">
    <original>KL</original>
    <variation>TV</variation>
    <location>
        <begin position="175"/>
        <end position="176"/>
    </location>
</feature>
<feature type="sequence conflict" description="In Ref. 3; AAA36167." evidence="14" ref="3">
    <original>G</original>
    <variation>S</variation>
    <location>
        <position position="182"/>
    </location>
</feature>
<feature type="sequence conflict" description="In Ref. 3; AAA36167." evidence="14" ref="3">
    <original>T</original>
    <variation>S</variation>
    <location>
        <position position="217"/>
    </location>
</feature>
<feature type="sequence conflict" description="In Ref. 8; AAH37311." evidence="14" ref="8">
    <original>I</original>
    <variation>T</variation>
    <location>
        <position position="264"/>
    </location>
</feature>
<feature type="sequence conflict" description="In Ref. 3; AAA36167." evidence="14" ref="3">
    <original>SNTR</original>
    <variation>LQHT</variation>
    <location>
        <begin position="293"/>
        <end position="296"/>
    </location>
</feature>
<feature type="sequence conflict" description="In Ref. 3; AAA36167." evidence="14" ref="3">
    <original>I</original>
    <variation>L</variation>
    <location>
        <position position="344"/>
    </location>
</feature>
<feature type="sequence conflict" description="In Ref. 8; AAH37311." evidence="14" ref="8">
    <original>P</original>
    <variation>H</variation>
    <location>
        <position position="381"/>
    </location>
</feature>
<feature type="sequence conflict" description="In Ref. 3; AAA36167." evidence="14" ref="3">
    <original>M</original>
    <variation>I</variation>
    <location>
        <position position="428"/>
    </location>
</feature>
<feature type="sequence conflict" description="In Ref. 1; AAA35631/AAA35632/AAA35633 and 5; AAB58779/AAB58780/AAB58781." evidence="14" ref="1 5">
    <original>AA</original>
    <variation>RR</variation>
    <location>
        <begin position="434"/>
        <end position="435"/>
    </location>
</feature>
<feature type="sequence conflict" description="In Ref. 3; AAA36167." evidence="14" ref="3">
    <original>E</original>
    <variation>D</variation>
    <location>
        <position position="456"/>
    </location>
</feature>
<feature type="sequence conflict" description="In Ref. 3; AAA36167." evidence="14" ref="3">
    <original>M</original>
    <variation>V</variation>
    <location>
        <position position="465"/>
    </location>
</feature>
<feature type="sequence conflict" description="In Ref. 3; AAA36167." evidence="14" ref="3">
    <original>S</original>
    <variation>N</variation>
    <location>
        <position position="482"/>
    </location>
</feature>
<feature type="sequence conflict" description="In Ref. 3; AAA36167." evidence="14" ref="3">
    <original>R</original>
    <variation>W</variation>
    <location>
        <position position="492"/>
    </location>
</feature>
<feature type="sequence conflict" description="In Ref. 3; AAA36167." evidence="14" ref="3">
    <original>L</original>
    <variation>P</variation>
    <location>
        <position position="515"/>
    </location>
</feature>
<feature type="sequence conflict" description="In Ref. 3; AAA36167." evidence="14" ref="3">
    <original>L</original>
    <variation>P</variation>
    <location>
        <position position="532"/>
    </location>
</feature>
<feature type="sequence conflict" description="In Ref. 1; AAA35633 and 5; AAB58781." evidence="14" ref="1 5">
    <original>GTP</original>
    <variation>A</variation>
    <location>
        <begin position="539"/>
        <end position="541"/>
    </location>
</feature>
<feature type="sequence conflict" description="In Ref. 3; AAA36167." evidence="14" ref="3">
    <location>
        <position position="550"/>
    </location>
</feature>
<feature type="sequence conflict" description="In Ref. 3; AAA36167." evidence="14" ref="3">
    <original>L</original>
    <variation>M</variation>
    <location>
        <position position="559"/>
    </location>
</feature>
<feature type="sequence conflict" description="In Ref. 1; AAA35633 and 5; AAB58781." evidence="14" ref="1 5">
    <original>CA</original>
    <variation>WP</variation>
    <location>
        <begin position="573"/>
        <end position="574"/>
    </location>
</feature>
<feature type="sequence conflict" description="In Ref. 3; AAA36167." evidence="14" ref="3">
    <original>R</original>
    <variation>Q</variation>
    <location>
        <position position="593"/>
    </location>
</feature>
<feature type="strand" evidence="17">
    <location>
        <begin position="231"/>
        <end position="235"/>
    </location>
</feature>
<feature type="helix" evidence="17">
    <location>
        <begin position="243"/>
        <end position="259"/>
    </location>
</feature>
<feature type="turn" evidence="17">
    <location>
        <begin position="261"/>
        <end position="263"/>
    </location>
</feature>
<feature type="strand" evidence="17">
    <location>
        <begin position="264"/>
        <end position="268"/>
    </location>
</feature>
<feature type="helix" evidence="17">
    <location>
        <begin position="273"/>
        <end position="275"/>
    </location>
</feature>
<feature type="helix" evidence="17">
    <location>
        <begin position="302"/>
        <end position="313"/>
    </location>
</feature>
<feature type="strand" evidence="17">
    <location>
        <begin position="318"/>
        <end position="322"/>
    </location>
</feature>
<feature type="helix" evidence="17">
    <location>
        <begin position="330"/>
        <end position="332"/>
    </location>
</feature>
<feature type="strand" evidence="17">
    <location>
        <begin position="333"/>
        <end position="337"/>
    </location>
</feature>
<feature type="strand" evidence="17">
    <location>
        <begin position="340"/>
        <end position="344"/>
    </location>
</feature>
<feature type="helix" evidence="17">
    <location>
        <begin position="349"/>
        <end position="358"/>
    </location>
</feature>
<feature type="turn" evidence="17">
    <location>
        <begin position="360"/>
        <end position="362"/>
    </location>
</feature>
<feature type="helix" evidence="17">
    <location>
        <begin position="363"/>
        <end position="366"/>
    </location>
</feature>
<feature type="helix" evidence="17">
    <location>
        <begin position="367"/>
        <end position="379"/>
    </location>
</feature>
<feature type="helix" evidence="17">
    <location>
        <begin position="382"/>
        <end position="384"/>
    </location>
</feature>
<feature type="strand" evidence="17">
    <location>
        <begin position="385"/>
        <end position="389"/>
    </location>
</feature>
<feature type="helix" evidence="17">
    <location>
        <begin position="394"/>
        <end position="411"/>
    </location>
</feature>
<sequence>MVQKTSMSRGPYPPSQEIPMEVFDPSPQGKYSKRKGRFKRSDGSTSSDTTSNSFVRQGSAESYTSRPSDSDVSLEEDREALRKEAERQALAQLEKAKTKPVAFAVRTNVGYNPSPGDEVPVQGVAITFEPKDFLHIKEKYNNDWWIGRLVKEGCEVGFIPSPVKLDSLRLLQEQKLRQNRLGSSKSGDNSSSSLGDVVTGTRRPTPPASAKQKQKSTEHVPPYDVVPSMRPIILVGPSLKGYEVTDMMQKALFDFLKHRFDGRISITRVTADISLAKRSVLNNPSKHIIIERSNTRSSLAEVQSEIERIFELARTLQLVALDADTINHPAQLSKTSLAPIIVYIKITSPKVLQRLIKSRGKSQSKHLNVQIAASEKLAQCPPEMFDIILDENQLEDACEHLAEYLEAYWKATHPPSSTPPNPLLNRTMATAALAASPAPVSNLQGPYLASGDQPLERATGEHASMHEYPGELGQPPGLYPSSHPPGRAGTLRALSRQDTFDADTPGSRNSAYTELGDSCVDMETDPSEGPGLGDPAGGGTPPARQGSWEDEEEDYEEELTDNRNRGRNKARYCAEGGGPVLGRNKNELEGWGRGVYIR</sequence>
<keyword id="KW-0002">3D-structure</keyword>
<keyword id="KW-0025">Alternative splicing</keyword>
<keyword id="KW-0106">Calcium</keyword>
<keyword id="KW-0107">Calcium channel</keyword>
<keyword id="KW-0109">Calcium transport</keyword>
<keyword id="KW-1003">Cell membrane</keyword>
<keyword id="KW-0407">Ion channel</keyword>
<keyword id="KW-0406">Ion transport</keyword>
<keyword id="KW-0472">Membrane</keyword>
<keyword id="KW-0597">Phosphoprotein</keyword>
<keyword id="KW-1267">Proteomics identification</keyword>
<keyword id="KW-1185">Reference proteome</keyword>
<keyword id="KW-0728">SH3 domain</keyword>
<keyword id="KW-0813">Transport</keyword>
<keyword id="KW-0851">Voltage-gated channel</keyword>
<organism>
    <name type="scientific">Homo sapiens</name>
    <name type="common">Human</name>
    <dbReference type="NCBI Taxonomy" id="9606"/>
    <lineage>
        <taxon>Eukaryota</taxon>
        <taxon>Metazoa</taxon>
        <taxon>Chordata</taxon>
        <taxon>Craniata</taxon>
        <taxon>Vertebrata</taxon>
        <taxon>Euteleostomi</taxon>
        <taxon>Mammalia</taxon>
        <taxon>Eutheria</taxon>
        <taxon>Euarchontoglires</taxon>
        <taxon>Primates</taxon>
        <taxon>Haplorrhini</taxon>
        <taxon>Catarrhini</taxon>
        <taxon>Hominidae</taxon>
        <taxon>Homo</taxon>
    </lineage>
</organism>
<gene>
    <name type="primary">CACNB1</name>
    <name type="synonym">CACNLB1</name>
</gene>
<proteinExistence type="evidence at protein level"/>
<reference key="1">
    <citation type="journal article" date="1992" name="J. Biol. Chem.">
        <title>Skeletal muscle and brain isoforms of a beta-subunit of human voltage-dependent calcium channels are encoded by a single gene.</title>
        <authorList>
            <person name="Powers P.A."/>
            <person name="Liu S."/>
            <person name="Hogan K."/>
            <person name="Gregg R.G."/>
        </authorList>
    </citation>
    <scope>NUCLEOTIDE SEQUENCE [MRNA] (ISOFORMS 1; 2 AND 3)</scope>
    <source>
        <tissue>Hippocampus</tissue>
        <tissue>Skeletal muscle</tissue>
    </source>
</reference>
<reference key="2">
    <citation type="journal article" date="1992" name="Neuron">
        <title>Structure and functional expression of alpha 1, alpha 2, and beta subunits of a novel human neuronal calcium channel subtype.</title>
        <authorList>
            <person name="Williams M.E."/>
            <person name="Feldman D.H."/>
            <person name="McCue A.F."/>
            <person name="Brenner R."/>
            <person name="Velicelebi G."/>
            <person name="Ellis S.B."/>
            <person name="Harpold M.M."/>
        </authorList>
    </citation>
    <scope>NUCLEOTIDE SEQUENCE [MRNA] (ISOFORM 3)</scope>
    <scope>FUNCTION</scope>
    <scope>SUBUNIT</scope>
    <scope>SUBCELLULAR LOCATION</scope>
</reference>
<reference key="3">
    <citation type="journal article" date="1993" name="Circ. Res.">
        <title>Molecular cloning of three isoforms of the L-type voltage-dependent calcium channel beta subunit from normal human heart.</title>
        <authorList>
            <person name="Collin T."/>
            <person name="Wang J."/>
            <person name="Nargeot J."/>
            <person name="Schwartz A."/>
        </authorList>
    </citation>
    <scope>NUCLEOTIDE SEQUENCE [MRNA] (ISOFORMS 1; 2 AND 3)</scope>
    <source>
        <tissue>Heart</tissue>
    </source>
</reference>
<reference key="4">
    <citation type="journal article" date="1996" name="Neurosci. Lett.">
        <title>Cyclic AMP-dependent modulation of N- and Q-type Ca2+ channels expressed in Xenopus oocytes.</title>
        <authorList>
            <person name="Fukuda K."/>
            <person name="Kaneko S."/>
            <person name="Yada N."/>
            <person name="Kikuwaka M."/>
            <person name="Akaike A."/>
            <person name="Satoh M."/>
        </authorList>
    </citation>
    <scope>NUCLEOTIDE SEQUENCE [MRNA] (ISOFORM 1)</scope>
    <source>
        <tissue>Brain cortex</tissue>
    </source>
</reference>
<reference key="5">
    <citation type="journal article" date="1999" name="Neurosci. Lett.">
        <title>Structure and alternative splicing of the gene encoding the human beta1 subunit of voltage dependent calcium channels.</title>
        <authorList>
            <person name="Hogan K."/>
            <person name="Greg R.G."/>
            <person name="Powers P.A."/>
        </authorList>
    </citation>
    <scope>NUCLEOTIDE SEQUENCE [GENOMIC DNA] (ISOFORMS 1; 2 AND 3)</scope>
</reference>
<reference key="6">
    <citation type="journal article" date="2004" name="Nat. Genet.">
        <title>Complete sequencing and characterization of 21,243 full-length human cDNAs.</title>
        <authorList>
            <person name="Ota T."/>
            <person name="Suzuki Y."/>
            <person name="Nishikawa T."/>
            <person name="Otsuki T."/>
            <person name="Sugiyama T."/>
            <person name="Irie R."/>
            <person name="Wakamatsu A."/>
            <person name="Hayashi K."/>
            <person name="Sato H."/>
            <person name="Nagai K."/>
            <person name="Kimura K."/>
            <person name="Makita H."/>
            <person name="Sekine M."/>
            <person name="Obayashi M."/>
            <person name="Nishi T."/>
            <person name="Shibahara T."/>
            <person name="Tanaka T."/>
            <person name="Ishii S."/>
            <person name="Yamamoto J."/>
            <person name="Saito K."/>
            <person name="Kawai Y."/>
            <person name="Isono Y."/>
            <person name="Nakamura Y."/>
            <person name="Nagahari K."/>
            <person name="Murakami K."/>
            <person name="Yasuda T."/>
            <person name="Iwayanagi T."/>
            <person name="Wagatsuma M."/>
            <person name="Shiratori A."/>
            <person name="Sudo H."/>
            <person name="Hosoiri T."/>
            <person name="Kaku Y."/>
            <person name="Kodaira H."/>
            <person name="Kondo H."/>
            <person name="Sugawara M."/>
            <person name="Takahashi M."/>
            <person name="Kanda K."/>
            <person name="Yokoi T."/>
            <person name="Furuya T."/>
            <person name="Kikkawa E."/>
            <person name="Omura Y."/>
            <person name="Abe K."/>
            <person name="Kamihara K."/>
            <person name="Katsuta N."/>
            <person name="Sato K."/>
            <person name="Tanikawa M."/>
            <person name="Yamazaki M."/>
            <person name="Ninomiya K."/>
            <person name="Ishibashi T."/>
            <person name="Yamashita H."/>
            <person name="Murakawa K."/>
            <person name="Fujimori K."/>
            <person name="Tanai H."/>
            <person name="Kimata M."/>
            <person name="Watanabe M."/>
            <person name="Hiraoka S."/>
            <person name="Chiba Y."/>
            <person name="Ishida S."/>
            <person name="Ono Y."/>
            <person name="Takiguchi S."/>
            <person name="Watanabe S."/>
            <person name="Yosida M."/>
            <person name="Hotuta T."/>
            <person name="Kusano J."/>
            <person name="Kanehori K."/>
            <person name="Takahashi-Fujii A."/>
            <person name="Hara H."/>
            <person name="Tanase T.-O."/>
            <person name="Nomura Y."/>
            <person name="Togiya S."/>
            <person name="Komai F."/>
            <person name="Hara R."/>
            <person name="Takeuchi K."/>
            <person name="Arita M."/>
            <person name="Imose N."/>
            <person name="Musashino K."/>
            <person name="Yuuki H."/>
            <person name="Oshima A."/>
            <person name="Sasaki N."/>
            <person name="Aotsuka S."/>
            <person name="Yoshikawa Y."/>
            <person name="Matsunawa H."/>
            <person name="Ichihara T."/>
            <person name="Shiohata N."/>
            <person name="Sano S."/>
            <person name="Moriya S."/>
            <person name="Momiyama H."/>
            <person name="Satoh N."/>
            <person name="Takami S."/>
            <person name="Terashima Y."/>
            <person name="Suzuki O."/>
            <person name="Nakagawa S."/>
            <person name="Senoh A."/>
            <person name="Mizoguchi H."/>
            <person name="Goto Y."/>
            <person name="Shimizu F."/>
            <person name="Wakebe H."/>
            <person name="Hishigaki H."/>
            <person name="Watanabe T."/>
            <person name="Sugiyama A."/>
            <person name="Takemoto M."/>
            <person name="Kawakami B."/>
            <person name="Yamazaki M."/>
            <person name="Watanabe K."/>
            <person name="Kumagai A."/>
            <person name="Itakura S."/>
            <person name="Fukuzumi Y."/>
            <person name="Fujimori Y."/>
            <person name="Komiyama M."/>
            <person name="Tashiro H."/>
            <person name="Tanigami A."/>
            <person name="Fujiwara T."/>
            <person name="Ono T."/>
            <person name="Yamada K."/>
            <person name="Fujii Y."/>
            <person name="Ozaki K."/>
            <person name="Hirao M."/>
            <person name="Ohmori Y."/>
            <person name="Kawabata A."/>
            <person name="Hikiji T."/>
            <person name="Kobatake N."/>
            <person name="Inagaki H."/>
            <person name="Ikema Y."/>
            <person name="Okamoto S."/>
            <person name="Okitani R."/>
            <person name="Kawakami T."/>
            <person name="Noguchi S."/>
            <person name="Itoh T."/>
            <person name="Shigeta K."/>
            <person name="Senba T."/>
            <person name="Matsumura K."/>
            <person name="Nakajima Y."/>
            <person name="Mizuno T."/>
            <person name="Morinaga M."/>
            <person name="Sasaki M."/>
            <person name="Togashi T."/>
            <person name="Oyama M."/>
            <person name="Hata H."/>
            <person name="Watanabe M."/>
            <person name="Komatsu T."/>
            <person name="Mizushima-Sugano J."/>
            <person name="Satoh T."/>
            <person name="Shirai Y."/>
            <person name="Takahashi Y."/>
            <person name="Nakagawa K."/>
            <person name="Okumura K."/>
            <person name="Nagase T."/>
            <person name="Nomura N."/>
            <person name="Kikuchi H."/>
            <person name="Masuho Y."/>
            <person name="Yamashita R."/>
            <person name="Nakai K."/>
            <person name="Yada T."/>
            <person name="Nakamura Y."/>
            <person name="Ohara O."/>
            <person name="Isogai T."/>
            <person name="Sugano S."/>
        </authorList>
    </citation>
    <scope>NUCLEOTIDE SEQUENCE [LARGE SCALE MRNA] (ISOFORM 1)</scope>
    <source>
        <tissue>Brain</tissue>
    </source>
</reference>
<reference key="7">
    <citation type="submission" date="2005-07" db="EMBL/GenBank/DDBJ databases">
        <authorList>
            <person name="Mural R.J."/>
            <person name="Istrail S."/>
            <person name="Sutton G.G."/>
            <person name="Florea L."/>
            <person name="Halpern A.L."/>
            <person name="Mobarry C.M."/>
            <person name="Lippert R."/>
            <person name="Walenz B."/>
            <person name="Shatkay H."/>
            <person name="Dew I."/>
            <person name="Miller J.R."/>
            <person name="Flanigan M.J."/>
            <person name="Edwards N.J."/>
            <person name="Bolanos R."/>
            <person name="Fasulo D."/>
            <person name="Halldorsson B.V."/>
            <person name="Hannenhalli S."/>
            <person name="Turner R."/>
            <person name="Yooseph S."/>
            <person name="Lu F."/>
            <person name="Nusskern D.R."/>
            <person name="Shue B.C."/>
            <person name="Zheng X.H."/>
            <person name="Zhong F."/>
            <person name="Delcher A.L."/>
            <person name="Huson D.H."/>
            <person name="Kravitz S.A."/>
            <person name="Mouchard L."/>
            <person name="Reinert K."/>
            <person name="Remington K.A."/>
            <person name="Clark A.G."/>
            <person name="Waterman M.S."/>
            <person name="Eichler E.E."/>
            <person name="Adams M.D."/>
            <person name="Hunkapiller M.W."/>
            <person name="Myers E.W."/>
            <person name="Venter J.C."/>
        </authorList>
    </citation>
    <scope>NUCLEOTIDE SEQUENCE [LARGE SCALE GENOMIC DNA]</scope>
</reference>
<reference key="8">
    <citation type="journal article" date="2004" name="Genome Res.">
        <title>The status, quality, and expansion of the NIH full-length cDNA project: the Mammalian Gene Collection (MGC).</title>
        <authorList>
            <consortium name="The MGC Project Team"/>
        </authorList>
    </citation>
    <scope>NUCLEOTIDE SEQUENCE [LARGE SCALE MRNA] (ISOFORM 1)</scope>
    <source>
        <tissue>Hippocampus</tissue>
    </source>
</reference>
<reference key="9">
    <citation type="journal article" date="1993" name="Hum. Mol. Genet.">
        <title>Genetic mapping of the beta 1- and gamma-subunits of the human skeletal muscle L-type voltage-dependent calcium channel on chromosome 17q and exclusion as candidate genes for malignant hyperthermia susceptibility.</title>
        <authorList>
            <person name="Iles D.E."/>
            <person name="Segers B."/>
            <person name="Sengers R.C.A."/>
            <person name="Monsieurs K."/>
            <person name="Heytens L."/>
            <person name="Halsall P.J."/>
            <person name="Hopkins P.M."/>
            <person name="Ellis F.R."/>
            <person name="Hall-Curran J.L."/>
            <person name="Stewart A.D."/>
            <person name="Wieringa B."/>
        </authorList>
    </citation>
    <scope>NUCLEOTIDE SEQUENCE [GENOMIC DNA] OF 146-209</scope>
</reference>
<reference key="10">
    <citation type="journal article" date="1993" name="Neuropharmacology">
        <title>Human neuronal voltage-dependent calcium channels: studies on subunit structure and role in channel assembly.</title>
        <authorList>
            <person name="Brust P.F."/>
            <person name="Simerson S."/>
            <person name="McCue A.F."/>
            <person name="Deal C.R."/>
            <person name="Schoonmaker S."/>
            <person name="Williams M.E."/>
            <person name="Velicelebi G."/>
            <person name="Johnson E.C."/>
            <person name="Harpold M.M."/>
            <person name="Ellis S.B."/>
        </authorList>
    </citation>
    <scope>NUCLEOTIDE SEQUENCE [MRNA] OF 445-598 (ISOFORMS 1 AND 3)</scope>
    <scope>FUNCTION</scope>
    <scope>SUBUNIT</scope>
    <scope>TISSUE SPECIFICITY</scope>
    <scope>ALTERNATIVE SPLICING</scope>
</reference>
<reference key="11">
    <citation type="journal article" date="2005" name="Am. J. Physiol.">
        <title>Unique modulation of L-type Ca2+ channels by short auxiliary beta1d subunit present in cardiac muscle.</title>
        <authorList>
            <person name="Cohen R.M."/>
            <person name="Foell J.D."/>
            <person name="Balijepalli R.C."/>
            <person name="Shah V."/>
            <person name="Hell J.W."/>
            <person name="Kamp T.J."/>
        </authorList>
    </citation>
    <scope>SUBUNIT</scope>
    <scope>SUBCELLULAR LOCATION</scope>
    <scope>FUNCTION</scope>
    <scope>TISSUE SPECIFICITY</scope>
</reference>
<reference key="12">
    <citation type="journal article" date="2006" name="Science">
        <title>The consensus coding sequences of human breast and colorectal cancers.</title>
        <authorList>
            <person name="Sjoeblom T."/>
            <person name="Jones S."/>
            <person name="Wood L.D."/>
            <person name="Parsons D.W."/>
            <person name="Lin J."/>
            <person name="Barber T.D."/>
            <person name="Mandelker D."/>
            <person name="Leary R.J."/>
            <person name="Ptak J."/>
            <person name="Silliman N."/>
            <person name="Szabo S."/>
            <person name="Buckhaults P."/>
            <person name="Farrell C."/>
            <person name="Meeh P."/>
            <person name="Markowitz S.D."/>
            <person name="Willis J."/>
            <person name="Dawson D."/>
            <person name="Willson J.K.V."/>
            <person name="Gazdar A.F."/>
            <person name="Hartigan J."/>
            <person name="Wu L."/>
            <person name="Liu C."/>
            <person name="Parmigiani G."/>
            <person name="Park B.H."/>
            <person name="Bachman K.E."/>
            <person name="Papadopoulos N."/>
            <person name="Vogelstein B."/>
            <person name="Kinzler K.W."/>
            <person name="Velculescu V.E."/>
        </authorList>
    </citation>
    <scope>VARIANT [LARGE SCALE ANALYSIS] LEU-339</scope>
</reference>
<evidence type="ECO:0000250" key="1">
    <source>
        <dbReference type="UniProtKB" id="P19517"/>
    </source>
</evidence>
<evidence type="ECO:0000250" key="2">
    <source>
        <dbReference type="UniProtKB" id="P54283"/>
    </source>
</evidence>
<evidence type="ECO:0000250" key="3">
    <source>
        <dbReference type="UniProtKB" id="Q8R3Z5"/>
    </source>
</evidence>
<evidence type="ECO:0000255" key="4">
    <source>
        <dbReference type="PROSITE-ProRule" id="PRU00192"/>
    </source>
</evidence>
<evidence type="ECO:0000256" key="5">
    <source>
        <dbReference type="SAM" id="MobiDB-lite"/>
    </source>
</evidence>
<evidence type="ECO:0000269" key="6">
    <source>
    </source>
</evidence>
<evidence type="ECO:0000269" key="7">
    <source>
    </source>
</evidence>
<evidence type="ECO:0000269" key="8">
    <source>
    </source>
</evidence>
<evidence type="ECO:0000269" key="9">
    <source>
    </source>
</evidence>
<evidence type="ECO:0000303" key="10">
    <source>
    </source>
</evidence>
<evidence type="ECO:0000303" key="11">
    <source>
    </source>
</evidence>
<evidence type="ECO:0000303" key="12">
    <source>
    </source>
</evidence>
<evidence type="ECO:0000303" key="13">
    <source>
    </source>
</evidence>
<evidence type="ECO:0000305" key="14"/>
<evidence type="ECO:0000305" key="15">
    <source>
    </source>
</evidence>
<evidence type="ECO:0000305" key="16">
    <source>
    </source>
</evidence>
<evidence type="ECO:0007829" key="17">
    <source>
        <dbReference type="PDB" id="7VFS"/>
    </source>
</evidence>
<accession>Q02641</accession>
<accession>A8K114</accession>
<accession>O15331</accession>
<accession>Q02639</accession>
<accession>Q02640</accession>
<accession>Q8N3X9</accession>
<accession>Q9C085</accession>
<accession>Q9UD79</accession>
<dbReference type="EMBL" id="M92303">
    <property type="protein sequence ID" value="AAA35633.1"/>
    <property type="molecule type" value="mRNA"/>
</dbReference>
<dbReference type="EMBL" id="M92301">
    <property type="protein sequence ID" value="AAA35631.1"/>
    <property type="molecule type" value="mRNA"/>
</dbReference>
<dbReference type="EMBL" id="M92302">
    <property type="protein sequence ID" value="AAA35632.1"/>
    <property type="molecule type" value="mRNA"/>
</dbReference>
<dbReference type="EMBL" id="M76560">
    <property type="protein sequence ID" value="AAA51894.1"/>
    <property type="molecule type" value="mRNA"/>
</dbReference>
<dbReference type="EMBL" id="L06110">
    <property type="protein sequence ID" value="AAA36167.1"/>
    <property type="molecule type" value="mRNA"/>
</dbReference>
<dbReference type="EMBL" id="L06111">
    <property type="protein sequence ID" value="AAA36168.1"/>
    <property type="molecule type" value="mRNA"/>
</dbReference>
<dbReference type="EMBL" id="L06112">
    <property type="protein sequence ID" value="AAA36169.1"/>
    <property type="molecule type" value="mRNA"/>
</dbReference>
<dbReference type="EMBL" id="AB054985">
    <property type="protein sequence ID" value="BAB21444.1"/>
    <property type="molecule type" value="mRNA"/>
</dbReference>
<dbReference type="EMBL" id="U86960">
    <property type="protein sequence ID" value="AAB58779.1"/>
    <property type="molecule type" value="Genomic_DNA"/>
</dbReference>
<dbReference type="EMBL" id="U86952">
    <property type="protein sequence ID" value="AAB58779.1"/>
    <property type="status" value="JOINED"/>
    <property type="molecule type" value="Genomic_DNA"/>
</dbReference>
<dbReference type="EMBL" id="U86953">
    <property type="protein sequence ID" value="AAB58779.1"/>
    <property type="status" value="JOINED"/>
    <property type="molecule type" value="Genomic_DNA"/>
</dbReference>
<dbReference type="EMBL" id="U86954">
    <property type="protein sequence ID" value="AAB58779.1"/>
    <property type="status" value="JOINED"/>
    <property type="molecule type" value="Genomic_DNA"/>
</dbReference>
<dbReference type="EMBL" id="U86955">
    <property type="protein sequence ID" value="AAB58779.1"/>
    <property type="status" value="JOINED"/>
    <property type="molecule type" value="Genomic_DNA"/>
</dbReference>
<dbReference type="EMBL" id="U86956">
    <property type="protein sequence ID" value="AAB58779.1"/>
    <property type="status" value="JOINED"/>
    <property type="molecule type" value="Genomic_DNA"/>
</dbReference>
<dbReference type="EMBL" id="U86957">
    <property type="protein sequence ID" value="AAB58779.1"/>
    <property type="status" value="JOINED"/>
    <property type="molecule type" value="Genomic_DNA"/>
</dbReference>
<dbReference type="EMBL" id="U86958">
    <property type="protein sequence ID" value="AAB58779.1"/>
    <property type="status" value="JOINED"/>
    <property type="molecule type" value="Genomic_DNA"/>
</dbReference>
<dbReference type="EMBL" id="U86959">
    <property type="protein sequence ID" value="AAB58779.1"/>
    <property type="status" value="JOINED"/>
    <property type="molecule type" value="Genomic_DNA"/>
</dbReference>
<dbReference type="EMBL" id="U86960">
    <property type="protein sequence ID" value="AAB58780.1"/>
    <property type="molecule type" value="Genomic_DNA"/>
</dbReference>
<dbReference type="EMBL" id="U86952">
    <property type="protein sequence ID" value="AAB58780.1"/>
    <property type="status" value="JOINED"/>
    <property type="molecule type" value="Genomic_DNA"/>
</dbReference>
<dbReference type="EMBL" id="U86953">
    <property type="protein sequence ID" value="AAB58780.1"/>
    <property type="status" value="JOINED"/>
    <property type="molecule type" value="Genomic_DNA"/>
</dbReference>
<dbReference type="EMBL" id="U86954">
    <property type="protein sequence ID" value="AAB58780.1"/>
    <property type="status" value="JOINED"/>
    <property type="molecule type" value="Genomic_DNA"/>
</dbReference>
<dbReference type="EMBL" id="U86955">
    <property type="protein sequence ID" value="AAB58780.1"/>
    <property type="status" value="JOINED"/>
    <property type="molecule type" value="Genomic_DNA"/>
</dbReference>
<dbReference type="EMBL" id="U86956">
    <property type="protein sequence ID" value="AAB58780.1"/>
    <property type="status" value="JOINED"/>
    <property type="molecule type" value="Genomic_DNA"/>
</dbReference>
<dbReference type="EMBL" id="U86957">
    <property type="protein sequence ID" value="AAB58780.1"/>
    <property type="status" value="JOINED"/>
    <property type="molecule type" value="Genomic_DNA"/>
</dbReference>
<dbReference type="EMBL" id="U86958">
    <property type="protein sequence ID" value="AAB58780.1"/>
    <property type="status" value="JOINED"/>
    <property type="molecule type" value="Genomic_DNA"/>
</dbReference>
<dbReference type="EMBL" id="U86959">
    <property type="protein sequence ID" value="AAB58780.1"/>
    <property type="status" value="JOINED"/>
    <property type="molecule type" value="Genomic_DNA"/>
</dbReference>
<dbReference type="EMBL" id="U86961">
    <property type="protein sequence ID" value="AAB58781.1"/>
    <property type="status" value="ALT_SEQ"/>
    <property type="molecule type" value="Genomic_DNA"/>
</dbReference>
<dbReference type="EMBL" id="U86952">
    <property type="protein sequence ID" value="AAB58781.1"/>
    <property type="status" value="JOINED"/>
    <property type="molecule type" value="Genomic_DNA"/>
</dbReference>
<dbReference type="EMBL" id="U86953">
    <property type="protein sequence ID" value="AAB58781.1"/>
    <property type="status" value="JOINED"/>
    <property type="molecule type" value="Genomic_DNA"/>
</dbReference>
<dbReference type="EMBL" id="U86954">
    <property type="protein sequence ID" value="AAB58781.1"/>
    <property type="status" value="JOINED"/>
    <property type="molecule type" value="Genomic_DNA"/>
</dbReference>
<dbReference type="EMBL" id="U86955">
    <property type="protein sequence ID" value="AAB58781.1"/>
    <property type="status" value="JOINED"/>
    <property type="molecule type" value="Genomic_DNA"/>
</dbReference>
<dbReference type="EMBL" id="U86956">
    <property type="protein sequence ID" value="AAB58781.1"/>
    <property type="status" value="JOINED"/>
    <property type="molecule type" value="Genomic_DNA"/>
</dbReference>
<dbReference type="EMBL" id="U86957">
    <property type="protein sequence ID" value="AAB58781.1"/>
    <property type="status" value="JOINED"/>
    <property type="molecule type" value="Genomic_DNA"/>
</dbReference>
<dbReference type="EMBL" id="U86958">
    <property type="protein sequence ID" value="AAB58781.1"/>
    <property type="status" value="JOINED"/>
    <property type="molecule type" value="Genomic_DNA"/>
</dbReference>
<dbReference type="EMBL" id="U86959">
    <property type="protein sequence ID" value="AAB58781.1"/>
    <property type="status" value="JOINED"/>
    <property type="molecule type" value="Genomic_DNA"/>
</dbReference>
<dbReference type="EMBL" id="U86960">
    <property type="protein sequence ID" value="AAB58781.1"/>
    <property type="status" value="JOINED"/>
    <property type="molecule type" value="Genomic_DNA"/>
</dbReference>
<dbReference type="EMBL" id="AK289729">
    <property type="protein sequence ID" value="BAF82418.1"/>
    <property type="molecule type" value="mRNA"/>
</dbReference>
<dbReference type="EMBL" id="CH471152">
    <property type="protein sequence ID" value="EAW60562.1"/>
    <property type="molecule type" value="Genomic_DNA"/>
</dbReference>
<dbReference type="EMBL" id="BC037311">
    <property type="protein sequence ID" value="AAH37311.2"/>
    <property type="molecule type" value="mRNA"/>
</dbReference>
<dbReference type="EMBL" id="Z21725">
    <property type="protein sequence ID" value="CAA79824.1"/>
    <property type="molecule type" value="Genomic_DNA"/>
</dbReference>
<dbReference type="EMBL" id="Z21726">
    <property type="protein sequence ID" value="CAA79825.1"/>
    <property type="status" value="ALT_INIT"/>
    <property type="molecule type" value="Genomic_DNA"/>
</dbReference>
<dbReference type="CCDS" id="CCDS11334.1">
    <molecule id="Q02641-2"/>
</dbReference>
<dbReference type="CCDS" id="CCDS42311.1">
    <molecule id="Q02641-1"/>
</dbReference>
<dbReference type="CCDS" id="CCDS45665.1">
    <molecule id="Q02641-3"/>
</dbReference>
<dbReference type="PIR" id="A44461">
    <property type="entry name" value="A44461"/>
</dbReference>
<dbReference type="PIR" id="B44461">
    <property type="entry name" value="B44461"/>
</dbReference>
<dbReference type="PIR" id="C44461">
    <property type="entry name" value="C44461"/>
</dbReference>
<dbReference type="PIR" id="I38002">
    <property type="entry name" value="I38002"/>
</dbReference>
<dbReference type="PIR" id="I52859">
    <property type="entry name" value="I52859"/>
</dbReference>
<dbReference type="PIR" id="I65766">
    <property type="entry name" value="I65766"/>
</dbReference>
<dbReference type="PIR" id="I65767">
    <property type="entry name" value="I65767"/>
</dbReference>
<dbReference type="PIR" id="JH0566">
    <property type="entry name" value="JH0566"/>
</dbReference>
<dbReference type="RefSeq" id="NP_000714.3">
    <molecule id="Q02641-1"/>
    <property type="nucleotide sequence ID" value="NM_000723.4"/>
</dbReference>
<dbReference type="RefSeq" id="NP_954855.1">
    <molecule id="Q02641-2"/>
    <property type="nucleotide sequence ID" value="NM_199247.3"/>
</dbReference>
<dbReference type="RefSeq" id="NP_954856.1">
    <molecule id="Q02641-3"/>
    <property type="nucleotide sequence ID" value="NM_199248.3"/>
</dbReference>
<dbReference type="PDB" id="7VFS">
    <property type="method" value="EM"/>
    <property type="resolution" value="2.80 A"/>
    <property type="chains" value="D=1-598"/>
</dbReference>
<dbReference type="PDB" id="7VFU">
    <property type="method" value="EM"/>
    <property type="resolution" value="3.00 A"/>
    <property type="chains" value="D=1-598"/>
</dbReference>
<dbReference type="PDB" id="7VFV">
    <property type="method" value="EM"/>
    <property type="resolution" value="3.00 A"/>
    <property type="chains" value="D=1-598"/>
</dbReference>
<dbReference type="PDB" id="7VFW">
    <property type="method" value="EM"/>
    <property type="resolution" value="3.30 A"/>
    <property type="chains" value="D=1-598"/>
</dbReference>
<dbReference type="PDB" id="7XLQ">
    <property type="method" value="EM"/>
    <property type="resolution" value="3.10 A"/>
    <property type="chains" value="B=1-598"/>
</dbReference>
<dbReference type="PDB" id="7YG5">
    <property type="method" value="EM"/>
    <property type="resolution" value="3.00 A"/>
    <property type="chains" value="B=1-598"/>
</dbReference>
<dbReference type="PDBsum" id="7VFS"/>
<dbReference type="PDBsum" id="7VFU"/>
<dbReference type="PDBsum" id="7VFV"/>
<dbReference type="PDBsum" id="7VFW"/>
<dbReference type="PDBsum" id="7XLQ"/>
<dbReference type="PDBsum" id="7YG5"/>
<dbReference type="EMDB" id="EMD-31958"/>
<dbReference type="EMDB" id="EMD-31959"/>
<dbReference type="EMDB" id="EMD-31960"/>
<dbReference type="EMDB" id="EMD-31961"/>
<dbReference type="EMDB" id="EMD-33285"/>
<dbReference type="EMDB" id="EMD-33808"/>
<dbReference type="SMR" id="Q02641"/>
<dbReference type="BioGRID" id="107236">
    <property type="interactions" value="14"/>
</dbReference>
<dbReference type="ComplexPortal" id="CPX-3192">
    <property type="entry name" value="Cav1.1 voltage-gated calcium channel complex, CACNA2D1-CACNB1-CACNG1 variant"/>
</dbReference>
<dbReference type="ComplexPortal" id="CPX-8740">
    <property type="entry name" value="Cav1.1 voltage-gated calcium channel complex, CACNA2D2-CACNB1-CACNG1 variant"/>
</dbReference>
<dbReference type="ComplexPortal" id="CPX-8762">
    <property type="entry name" value="Cav1.1 voltage-gated calcium channel complex, CACNA2D3-CACNB1-CACNG1 variant"/>
</dbReference>
<dbReference type="ComplexPortal" id="CPX-8769">
    <property type="entry name" value="Cav1.1 voltage-gated calcium channel complex, CACNA2D4-CACNB1-CACNG1 variant"/>
</dbReference>
<dbReference type="ComplexPortal" id="CPX-8862">
    <property type="entry name" value="Cav1.2 voltage-gated calcium channel complex, CACNA2D1-CACNB1 variant"/>
</dbReference>
<dbReference type="ComplexPortal" id="CPX-8865">
    <property type="entry name" value="Cav1.2 voltage-gated calcium channel complex, CACNA2D2-CACNB1 variant"/>
</dbReference>
<dbReference type="ComplexPortal" id="CPX-8868">
    <property type="entry name" value="Cav1.2 voltage-gated calcium channel complex, CACNA2D3-CACNB1 variant"/>
</dbReference>
<dbReference type="ComplexPortal" id="CPX-8872">
    <property type="entry name" value="Cav1.2 voltage-gated calcium channel complex, CACNA2D4-CACNB1 variant"/>
</dbReference>
<dbReference type="CORUM" id="Q02641"/>
<dbReference type="FunCoup" id="Q02641">
    <property type="interactions" value="1054"/>
</dbReference>
<dbReference type="IntAct" id="Q02641">
    <property type="interactions" value="13"/>
</dbReference>
<dbReference type="MINT" id="Q02641"/>
<dbReference type="STRING" id="9606.ENSP00000377840"/>
<dbReference type="BindingDB" id="Q02641"/>
<dbReference type="ChEMBL" id="CHEMBL3988638"/>
<dbReference type="ChEMBL" id="CHEMBL3988640"/>
<dbReference type="ChEMBL" id="CHEMBL4106160"/>
<dbReference type="DrugBank" id="DB01118">
    <property type="generic name" value="Amiodarone"/>
</dbReference>
<dbReference type="DrugBank" id="DB00381">
    <property type="generic name" value="Amlodipine"/>
</dbReference>
<dbReference type="DrugBank" id="DB09230">
    <property type="generic name" value="Azelnidipine"/>
</dbReference>
<dbReference type="DrugBank" id="DB09231">
    <property type="generic name" value="Benidipine"/>
</dbReference>
<dbReference type="DrugBank" id="DB13746">
    <property type="generic name" value="Bioallethrin"/>
</dbReference>
<dbReference type="DrugBank" id="DB11148">
    <property type="generic name" value="Butamben"/>
</dbReference>
<dbReference type="DrugBank" id="DB11093">
    <property type="generic name" value="Calcium citrate"/>
</dbReference>
<dbReference type="DrugBank" id="DB11348">
    <property type="generic name" value="Calcium Phosphate"/>
</dbReference>
<dbReference type="DrugBank" id="DB14481">
    <property type="generic name" value="Calcium phosphate dihydrate"/>
</dbReference>
<dbReference type="DrugBank" id="DB09232">
    <property type="generic name" value="Cilnidipine"/>
</dbReference>
<dbReference type="DrugBank" id="DB04855">
    <property type="generic name" value="Dronedarone"/>
</dbReference>
<dbReference type="DrugBank" id="DB06751">
    <property type="generic name" value="Drotaverine"/>
</dbReference>
<dbReference type="DrugBank" id="DB09235">
    <property type="generic name" value="Efonidipine"/>
</dbReference>
<dbReference type="DrugBank" id="DB00228">
    <property type="generic name" value="Enflurane"/>
</dbReference>
<dbReference type="DrugBank" id="DB00153">
    <property type="generic name" value="Ergocalciferol"/>
</dbReference>
<dbReference type="DrugBank" id="DB00898">
    <property type="generic name" value="Ethanol"/>
</dbReference>
<dbReference type="DrugBank" id="DB13961">
    <property type="generic name" value="Fish oil"/>
</dbReference>
<dbReference type="DrugBank" id="DB00308">
    <property type="generic name" value="Ibutilide"/>
</dbReference>
<dbReference type="DrugBank" id="DB09236">
    <property type="generic name" value="Lacidipine"/>
</dbReference>
<dbReference type="DrugBank" id="DB00825">
    <property type="generic name" value="Levomenthol"/>
</dbReference>
<dbReference type="DrugBank" id="DB00653">
    <property type="generic name" value="Magnesium sulfate"/>
</dbReference>
<dbReference type="DrugBank" id="DB09238">
    <property type="generic name" value="Manidipine"/>
</dbReference>
<dbReference type="DrugBank" id="DB01388">
    <property type="generic name" value="Mibefradil"/>
</dbReference>
<dbReference type="DrugBank" id="DB01110">
    <property type="generic name" value="Miconazole"/>
</dbReference>
<dbReference type="DrugBank" id="DB00622">
    <property type="generic name" value="Nicardipine"/>
</dbReference>
<dbReference type="DrugBank" id="DB06712">
    <property type="generic name" value="Nilvadipine"/>
</dbReference>
<dbReference type="DrugBank" id="DB00393">
    <property type="generic name" value="Nimodipine"/>
</dbReference>
<dbReference type="DrugBank" id="DB01054">
    <property type="generic name" value="Nitrendipine"/>
</dbReference>
<dbReference type="DrugBank" id="DB00252">
    <property type="generic name" value="Phenytoin"/>
</dbReference>
<dbReference type="DrugBank" id="DB00243">
    <property type="generic name" value="Ranolazine"/>
</dbReference>
<dbReference type="DrugBank" id="DB00421">
    <property type="generic name" value="Spironolactone"/>
</dbReference>
<dbReference type="DrugBank" id="DB00273">
    <property type="generic name" value="Topiramate"/>
</dbReference>
<dbReference type="DrugBank" id="DB09089">
    <property type="generic name" value="Trimebutine"/>
</dbReference>
<dbReference type="DrugBank" id="DB00661">
    <property type="generic name" value="Verapamil"/>
</dbReference>
<dbReference type="GlyGen" id="Q02641">
    <property type="glycosylation" value="3 sites, 1 O-linked glycan (1 site)"/>
</dbReference>
<dbReference type="iPTMnet" id="Q02641"/>
<dbReference type="PhosphoSitePlus" id="Q02641"/>
<dbReference type="BioMuta" id="CACNB1"/>
<dbReference type="DMDM" id="20455481"/>
<dbReference type="jPOST" id="Q02641"/>
<dbReference type="MassIVE" id="Q02641"/>
<dbReference type="PaxDb" id="9606-ENSP00000377840"/>
<dbReference type="PeptideAtlas" id="Q02641"/>
<dbReference type="ProteomicsDB" id="58113">
    <molecule id="Q02641-1"/>
</dbReference>
<dbReference type="ProteomicsDB" id="58114">
    <molecule id="Q02641-2"/>
</dbReference>
<dbReference type="ProteomicsDB" id="58115">
    <molecule id="Q02641-3"/>
</dbReference>
<dbReference type="ABCD" id="Q02641">
    <property type="antibodies" value="1 sequenced antibody"/>
</dbReference>
<dbReference type="Antibodypedia" id="4063">
    <property type="antibodies" value="398 antibodies from 35 providers"/>
</dbReference>
<dbReference type="DNASU" id="782"/>
<dbReference type="Ensembl" id="ENST00000344140.6">
    <molecule id="Q02641-2"/>
    <property type="protein sequence ID" value="ENSP00000345461.5"/>
    <property type="gene ID" value="ENSG00000067191.17"/>
</dbReference>
<dbReference type="Ensembl" id="ENST00000394303.8">
    <molecule id="Q02641-1"/>
    <property type="protein sequence ID" value="ENSP00000377840.3"/>
    <property type="gene ID" value="ENSG00000067191.17"/>
</dbReference>
<dbReference type="Ensembl" id="ENST00000394310.7">
    <molecule id="Q02641-3"/>
    <property type="protein sequence ID" value="ENSP00000377847.3"/>
    <property type="gene ID" value="ENSG00000067191.17"/>
</dbReference>
<dbReference type="GeneID" id="782"/>
<dbReference type="KEGG" id="hsa:782"/>
<dbReference type="MANE-Select" id="ENST00000394303.8">
    <property type="protein sequence ID" value="ENSP00000377840.3"/>
    <property type="RefSeq nucleotide sequence ID" value="NM_000723.5"/>
    <property type="RefSeq protein sequence ID" value="NP_000714.3"/>
</dbReference>
<dbReference type="UCSC" id="uc002hrm.2">
    <molecule id="Q02641-1"/>
    <property type="organism name" value="human"/>
</dbReference>
<dbReference type="AGR" id="HGNC:1401"/>
<dbReference type="CTD" id="782"/>
<dbReference type="DisGeNET" id="782"/>
<dbReference type="GeneCards" id="CACNB1"/>
<dbReference type="HGNC" id="HGNC:1401">
    <property type="gene designation" value="CACNB1"/>
</dbReference>
<dbReference type="HPA" id="ENSG00000067191">
    <property type="expression patterns" value="Group enriched (skeletal muscle, tongue)"/>
</dbReference>
<dbReference type="MIM" id="114207">
    <property type="type" value="gene"/>
</dbReference>
<dbReference type="neXtProt" id="NX_Q02641"/>
<dbReference type="OpenTargets" id="ENSG00000067191"/>
<dbReference type="PharmGKB" id="PA87"/>
<dbReference type="VEuPathDB" id="HostDB:ENSG00000067191"/>
<dbReference type="eggNOG" id="KOG3812">
    <property type="taxonomic scope" value="Eukaryota"/>
</dbReference>
<dbReference type="GeneTree" id="ENSGT00950000182837"/>
<dbReference type="HOGENOM" id="CLU_021995_3_0_1"/>
<dbReference type="InParanoid" id="Q02641"/>
<dbReference type="OMA" id="MDLWPGM"/>
<dbReference type="OrthoDB" id="5962384at2759"/>
<dbReference type="PAN-GO" id="Q02641">
    <property type="GO annotations" value="5 GO annotations based on evolutionary models"/>
</dbReference>
<dbReference type="PhylomeDB" id="Q02641"/>
<dbReference type="TreeFam" id="TF316195"/>
<dbReference type="PathwayCommons" id="Q02641"/>
<dbReference type="Reactome" id="R-HSA-112308">
    <property type="pathway name" value="Presynaptic depolarization and calcium channel opening"/>
</dbReference>
<dbReference type="Reactome" id="R-HSA-419037">
    <property type="pathway name" value="NCAM1 interactions"/>
</dbReference>
<dbReference type="Reactome" id="R-HSA-5576892">
    <property type="pathway name" value="Phase 0 - rapid depolarisation"/>
</dbReference>
<dbReference type="Reactome" id="R-HSA-5576893">
    <property type="pathway name" value="Phase 2 - plateau phase"/>
</dbReference>
<dbReference type="Reactome" id="R-HSA-9856532">
    <property type="pathway name" value="Mechanical load activates signaling by PIEZO1 and integrins in osteocytes"/>
</dbReference>
<dbReference type="SignaLink" id="Q02641"/>
<dbReference type="SIGNOR" id="Q02641"/>
<dbReference type="BioGRID-ORCS" id="782">
    <property type="hits" value="17 hits in 1161 CRISPR screens"/>
</dbReference>
<dbReference type="CD-CODE" id="FB4E32DD">
    <property type="entry name" value="Presynaptic clusters and postsynaptic densities"/>
</dbReference>
<dbReference type="ChiTaRS" id="CACNB1">
    <property type="organism name" value="human"/>
</dbReference>
<dbReference type="GeneWiki" id="CACNB1"/>
<dbReference type="GenomeRNAi" id="782"/>
<dbReference type="Pharos" id="Q02641">
    <property type="development level" value="Tbio"/>
</dbReference>
<dbReference type="PRO" id="PR:Q02641"/>
<dbReference type="Proteomes" id="UP000005640">
    <property type="component" value="Chromosome 17"/>
</dbReference>
<dbReference type="RNAct" id="Q02641">
    <property type="molecule type" value="protein"/>
</dbReference>
<dbReference type="Bgee" id="ENSG00000067191">
    <property type="expression patterns" value="Expressed in gastrocnemius and 150 other cell types or tissues"/>
</dbReference>
<dbReference type="ExpressionAtlas" id="Q02641">
    <property type="expression patterns" value="baseline and differential"/>
</dbReference>
<dbReference type="GO" id="GO:1990454">
    <property type="term" value="C:L-type voltage-gated calcium channel complex"/>
    <property type="evidence" value="ECO:0000266"/>
    <property type="project" value="ComplexPortal"/>
</dbReference>
<dbReference type="GO" id="GO:0005886">
    <property type="term" value="C:plasma membrane"/>
    <property type="evidence" value="ECO:0000304"/>
    <property type="project" value="Reactome"/>
</dbReference>
<dbReference type="GO" id="GO:0045202">
    <property type="term" value="C:synapse"/>
    <property type="evidence" value="ECO:0007669"/>
    <property type="project" value="GOC"/>
</dbReference>
<dbReference type="GO" id="GO:0030315">
    <property type="term" value="C:T-tubule"/>
    <property type="evidence" value="ECO:0000303"/>
    <property type="project" value="ComplexPortal"/>
</dbReference>
<dbReference type="GO" id="GO:0005891">
    <property type="term" value="C:voltage-gated calcium channel complex"/>
    <property type="evidence" value="ECO:0000316"/>
    <property type="project" value="ARUK-UCL"/>
</dbReference>
<dbReference type="GO" id="GO:0005246">
    <property type="term" value="F:calcium channel regulator activity"/>
    <property type="evidence" value="ECO:0000316"/>
    <property type="project" value="ARUK-UCL"/>
</dbReference>
<dbReference type="GO" id="GO:0008331">
    <property type="term" value="F:high voltage-gated calcium channel activity"/>
    <property type="evidence" value="ECO:0000318"/>
    <property type="project" value="GO_Central"/>
</dbReference>
<dbReference type="GO" id="GO:0005245">
    <property type="term" value="F:voltage-gated calcium channel activity"/>
    <property type="evidence" value="ECO:0000304"/>
    <property type="project" value="ProtInc"/>
</dbReference>
<dbReference type="GO" id="GO:0070588">
    <property type="term" value="P:calcium ion transmembrane transport"/>
    <property type="evidence" value="ECO:0000303"/>
    <property type="project" value="ComplexPortal"/>
</dbReference>
<dbReference type="GO" id="GO:0006816">
    <property type="term" value="P:calcium ion transport"/>
    <property type="evidence" value="ECO:0000318"/>
    <property type="project" value="GO_Central"/>
</dbReference>
<dbReference type="GO" id="GO:1904646">
    <property type="term" value="P:cellular response to amyloid-beta"/>
    <property type="evidence" value="ECO:0000316"/>
    <property type="project" value="ARUK-UCL"/>
</dbReference>
<dbReference type="GO" id="GO:0007268">
    <property type="term" value="P:chemical synaptic transmission"/>
    <property type="evidence" value="ECO:0000318"/>
    <property type="project" value="GO_Central"/>
</dbReference>
<dbReference type="GO" id="GO:0045933">
    <property type="term" value="P:positive regulation of muscle contraction"/>
    <property type="evidence" value="ECO:0000303"/>
    <property type="project" value="ComplexPortal"/>
</dbReference>
<dbReference type="GO" id="GO:1902514">
    <property type="term" value="P:regulation of calcium ion transmembrane transport via high voltage-gated calcium channel"/>
    <property type="evidence" value="ECO:0000316"/>
    <property type="project" value="ARUK-UCL"/>
</dbReference>
<dbReference type="FunFam" id="2.30.30.40:FF:000068">
    <property type="entry name" value="Voltage-dependent L-type calcium channel subunit beta-1 isoform 1"/>
    <property type="match status" value="1"/>
</dbReference>
<dbReference type="FunFam" id="3.40.50.300:FF:000432">
    <property type="entry name" value="Voltage-dependent L-type calcium channel subunit beta-1 isoform 1"/>
    <property type="match status" value="1"/>
</dbReference>
<dbReference type="Gene3D" id="3.40.50.300">
    <property type="entry name" value="P-loop containing nucleotide triphosphate hydrolases"/>
    <property type="match status" value="1"/>
</dbReference>
<dbReference type="Gene3D" id="2.30.30.40">
    <property type="entry name" value="SH3 Domains"/>
    <property type="match status" value="1"/>
</dbReference>
<dbReference type="InterPro" id="IPR046937">
    <property type="entry name" value="CAB1-4_N_A-dom"/>
</dbReference>
<dbReference type="InterPro" id="IPR008145">
    <property type="entry name" value="GK/Ca_channel_bsu"/>
</dbReference>
<dbReference type="InterPro" id="IPR027417">
    <property type="entry name" value="P-loop_NTPase"/>
</dbReference>
<dbReference type="InterPro" id="IPR036028">
    <property type="entry name" value="SH3-like_dom_sf"/>
</dbReference>
<dbReference type="InterPro" id="IPR001452">
    <property type="entry name" value="SH3_domain"/>
</dbReference>
<dbReference type="InterPro" id="IPR005443">
    <property type="entry name" value="VDCC_L_b1su"/>
</dbReference>
<dbReference type="InterPro" id="IPR000584">
    <property type="entry name" value="VDCC_L_bsu"/>
</dbReference>
<dbReference type="PANTHER" id="PTHR11824">
    <property type="entry name" value="VOLTAGE-DEPENDENT CALCIUM CHANNEL BETA SUBUNIT"/>
    <property type="match status" value="1"/>
</dbReference>
<dbReference type="Pfam" id="PF00625">
    <property type="entry name" value="Guanylate_kin"/>
    <property type="match status" value="1"/>
</dbReference>
<dbReference type="Pfam" id="PF12052">
    <property type="entry name" value="VGCC_beta4Aa_N"/>
    <property type="match status" value="1"/>
</dbReference>
<dbReference type="PRINTS" id="PR01626">
    <property type="entry name" value="LCACHANNELB"/>
</dbReference>
<dbReference type="PRINTS" id="PR01627">
    <property type="entry name" value="LCACHANNELB1"/>
</dbReference>
<dbReference type="SMART" id="SM00072">
    <property type="entry name" value="GuKc"/>
    <property type="match status" value="1"/>
</dbReference>
<dbReference type="SUPFAM" id="SSF52540">
    <property type="entry name" value="P-loop containing nucleoside triphosphate hydrolases"/>
    <property type="match status" value="1"/>
</dbReference>
<dbReference type="SUPFAM" id="SSF50044">
    <property type="entry name" value="SH3-domain"/>
    <property type="match status" value="1"/>
</dbReference>
<dbReference type="PROSITE" id="PS50002">
    <property type="entry name" value="SH3"/>
    <property type="match status" value="1"/>
</dbReference>
<name>CACB1_HUMAN</name>
<comment type="function">
    <text evidence="1 6 7 9">Regulatory subunit of L-type calcium channels (PubMed:1309651, PubMed:15615847, PubMed:8107964). Regulates the activity of L-type calcium channels that contain CACNA1A as pore-forming subunit (By similarity). Regulates the activity of L-type calcium channels that contain CACNA1C as pore-forming subunit and increases the presence of the channel complex at the cell membrane (PubMed:15615847). Required for functional expression L-type calcium channels that contain CACNA1D as pore-forming subunit (PubMed:1309651). Regulates the activity of L-type calcium channels that contain CACNA1B as pore-forming subunit (PubMed:8107964).</text>
</comment>
<comment type="subunit">
    <text evidence="1 2 3 6 7 9">Regulatory subunit of L-type calcium channels that consist of a pore-forming alpha subunit and auxiliary beta, gamma and delta subunits (By similarity). Interacts with CACNA1A, CACNA1B, CACNA1C and CACNA1S (By similarity). Component of a calcium channel complex consisting of a pore-forming alpha subunit (CACNA1S) and the ancillary subunits CACNB1 or CACNB2, CACNG1 and CACNA2D1. Identified in a complex with CACNA1C (PubMed:15615847). Identified in a complex with the L-type calcium channel subunits CACNA1C, CACNA2D1, CACNB1 and one of the gamma subunits (CACNG4, CACNG6, CACNG7, or CACNG8) (By similarity). Part of a L-type calcium channel complex that contains CACNA1D, CACNA2D1 and CACNB1 (PubMed:1309651). Part of a L-type calcium channel complex that contains CACNA1B, CACNA2D1 and CACNB1 (PubMed:8107964). Interacts with JSRP1. Interacts with RYR1 (By similarity). Interacts with CBARP (By similarity).</text>
</comment>
<comment type="interaction">
    <interactant intactId="EBI-947514">
        <id>Q02641</id>
    </interactant>
    <interactant intactId="EBI-10171902">
        <id>P56545-3</id>
        <label>CTBP2</label>
    </interactant>
    <organismsDiffer>false</organismsDiffer>
    <experiments>3</experiments>
</comment>
<comment type="interaction">
    <interactant intactId="EBI-947514">
        <id>Q02641</id>
    </interactant>
    <interactant intactId="EBI-744104">
        <id>P55040</id>
        <label>GEM</label>
    </interactant>
    <organismsDiffer>false</organismsDiffer>
    <experiments>3</experiments>
</comment>
<comment type="interaction">
    <interactant intactId="EBI-15707950">
        <id>Q02641-1</id>
    </interactant>
    <interactant intactId="EBI-1038838">
        <id>Q13936</id>
        <label>CACNA1C</label>
    </interactant>
    <organismsDiffer>false</organismsDiffer>
    <experiments>2</experiments>
</comment>
<comment type="subcellular location">
    <subcellularLocation>
        <location evidence="16">Cell membrane</location>
        <location evidence="16">Sarcolemma</location>
        <topology evidence="1">Peripheral membrane protein</topology>
        <orientation evidence="1">Cytoplasmic side</orientation>
    </subcellularLocation>
    <subcellularLocation>
        <location evidence="15">Cell membrane</location>
        <topology evidence="15">Peripheral membrane protein</topology>
    </subcellularLocation>
</comment>
<comment type="alternative products">
    <event type="alternative splicing"/>
    <isoform>
        <id>Q02641-1</id>
        <name>1</name>
        <name>Beta-1b2</name>
        <name>BetaA</name>
        <name>Beta-1B</name>
        <name>Beta1-2</name>
        <sequence type="displayed"/>
    </isoform>
    <isoform>
        <id>Q02641-2</id>
        <name>2</name>
        <name>Beta-1M</name>
        <name>BetaC</name>
        <name>Beta-1a</name>
        <sequence type="described" ref="VSP_000623 VSP_000624 VSP_000625"/>
    </isoform>
    <isoform>
        <id>Q02641-3</id>
        <name>3</name>
        <name>Beta-1b1</name>
        <name>BetaB</name>
        <name>Beta-1c</name>
        <name>Beta1-3</name>
        <sequence type="described" ref="VSP_000624 VSP_000625"/>
    </isoform>
</comment>
<comment type="tissue specificity">
    <text evidence="7 9">Detected in heart ventricle (at protein level) (PubMed:15615847). Isoform 1 and isoform 3 are expressed in brain, heart, spleen, central nervous system and neuroblastoma cells. Isoform 2 is expressed in skeletal muscle.</text>
</comment>
<comment type="similarity">
    <text evidence="14">Belongs to the calcium channel beta subunit family.</text>
</comment>
<comment type="sequence caution" evidence="14">
    <conflict type="erroneous initiation">
        <sequence resource="EMBL-CDS" id="CAA79825"/>
    </conflict>
</comment>
<protein>
    <recommendedName>
        <fullName>Voltage-dependent L-type calcium channel subunit beta-1</fullName>
        <shortName>CAB1</shortName>
    </recommendedName>
    <alternativeName>
        <fullName>Calcium channel voltage-dependent subunit beta 1</fullName>
    </alternativeName>
</protein>